<sequence length="1228" mass="134495">MMKRYTIILAVFLLFCTVFTFQIKARPYERFADVEKPWIQKHSMDSKLVPANKGNLIQAEIVYQSVSEHSDLVISPVNEIRPANRFPSHRKSFFAENLRASPPVVPVAVDKYAVPVANPMDPENPNAWDVTLKITTKAVTVPVDVVMVIDQSSSMGGQNIARLKSAIASGQRFVKKMLPKGMATEGVRIALVSYDHEPHRLSDFTKDTAFLCQKIRALTPIWGTHTQGGLKMARNIMATSTAVDKHIILMSDGLATEQYPVKNVTTADFIGETGNANDPIDLVIQGAINFPTNYVSNNPSTPLTPNYPTHSSKVGRRNLPESKFDYSNLSARITFDGVAGALVYEPRFPHPYYYYFPCNAAINEAQFAKNSGYTIHTIGYDLGDFALANNSLKLTATDENHFFTATPANLAAAFDNIAQTINIGIQRGEVTDFVAPGFIVKNLTQSGDVTHLLNVSNGTVHYDVSTKKLTWTTGTILSSSEATITYRIYADLDYIQNNDIPVNTTSAIGPDLGGFDTNTEAKLTYTNSNGESNQQLIFPRPTVKLGYGVIKRHYVLVNKDGQPIQANGTVVSSLSEAHVLQSQDFFLPSGGGHIVPKWIKLDKTTEALQYYSVPPTNTVITTADGKRYRFVEVPGSTPNPGQIGISWKKPAGNAYFAYKLLNYWMGGTTDQQSEWDVTSNWTGAQVPLTGEDVEFATTENFGSPAVADLHVPTTNPKIIGNLINNSDKDLVVTTNSQLTINGVVEDNNPNVGTIVVKSSKDNPTGTLLFANPGYNQNVGGTVEFYNQGYDCADCGMYRRSWQYFGIPVNESGFPINDVGGNETVNQWVEPFNGDKWRPAPYAPDTKLQKFKGYQITNDVQAQPTGVYSFKGTLCVCDAFLNLTRTSGVNYSGANLIGNSYTGAIDIKQGIVFPPEVEQTVYLFNTGTRDQWRKLNGSTVSGFRAGQYLSVPKNTAGQDNLPDRIPSMHSFLVKMQNGASCTLQILYDKLLKNTTVNNGNGTQITWRSGNSGSANMPSLVMDVLGNESADRLWIFTDGGLSFGFDNGWDGRKLTEKGLSQLYAMSDIGNDKFQVAGVPELNNLLIGFDADKDGQYTLEFALSDHFAKGGVFLEDLSRGVTRRIVDGGSYSFDAKRGDSGARFRLSYDEEWVESAEVSVLVGTVGKRILITNNCEHACQANVYTTDGKLLIRLDVKPGSKSMTEPLIDGAYVVSLQSPATSSNVRKVVVN</sequence>
<proteinExistence type="evidence at protein level"/>
<keyword id="KW-0002">3D-structure</keyword>
<keyword id="KW-0281">Fimbrium</keyword>
<keyword id="KW-0732">Signal</keyword>
<keyword id="KW-0843">Virulence</keyword>
<name>MFA5_PORG3</name>
<comment type="function">
    <text evidence="5 11">Accessory subunit of the minor fimbriae. These filamentous pili are attached to the cell surface; they mediate biofilm formation, adhesion onto host cells and onto other bacteria that are part of the oral microbiome (PubMed:26001707). They play an important role in invasion of periodontal tissues and are recognized as major virulence factors. Fimbrium subunits from different strains have highly divergent sequences, and this correlates with pathogenicity (Probable).</text>
</comment>
<comment type="subunit">
    <text evidence="3 4 5 6 11">Minor fimbriae are composed of a structural subunit, most often Mfa1, and the accessory subunits Mfa3, Mfa4 and Mfa5 (PubMed:19589838, PubMed:24118823, PubMed:26001707, PubMed:26437277). Fimbrium assembly occurs by linear, head-to-tail oligomerization of fimbrial subunits. This is mediated via insertion of a C-terminal beta-strand from one subunit into a groove in the N-terminal domain of the following subunit (Probable).</text>
</comment>
<comment type="subcellular location">
    <subcellularLocation>
        <location evidence="3 4 5 6">Fimbrium</location>
    </subcellularLocation>
</comment>
<comment type="miscellaneous">
    <text evidence="11">The name (minor fimbrium subunit) does not indicate the abundance of the protein, but is derived from the greater length of the major fimbriae. In strain ATCC 33277 and strain ATCC BAA-1703 / FDC 381, major fimbriae are 300 - 1600 nM in length and about 5 nm in diameter. In contrast, minor fimbriae are only about 80 - 120 nm long. This length difference is observed only in a small number of strains, including strain ATCC 33277 and strain ATCC BAA-1703 / FDC 381, and is due to a loss of function mutation in FimB, a protein that restricts fimbrial length in other strains.</text>
</comment>
<feature type="signal peptide" evidence="1">
    <location>
        <begin position="1"/>
        <end position="25"/>
    </location>
</feature>
<feature type="chain" id="PRO_0000436800" description="Minor fimbrium subunit Mfa5">
    <location>
        <begin position="26"/>
        <end position="1228"/>
    </location>
</feature>
<feature type="domain" description="VWFA" evidence="2">
    <location>
        <begin position="144"/>
        <end position="267"/>
    </location>
</feature>
<feature type="strand" evidence="14">
    <location>
        <begin position="107"/>
        <end position="115"/>
    </location>
</feature>
<feature type="strand" evidence="14">
    <location>
        <begin position="125"/>
        <end position="136"/>
    </location>
</feature>
<feature type="strand" evidence="14">
    <location>
        <begin position="143"/>
        <end position="150"/>
    </location>
</feature>
<feature type="helix" evidence="14">
    <location>
        <begin position="153"/>
        <end position="155"/>
    </location>
</feature>
<feature type="helix" evidence="14">
    <location>
        <begin position="157"/>
        <end position="159"/>
    </location>
</feature>
<feature type="helix" evidence="14">
    <location>
        <begin position="160"/>
        <end position="177"/>
    </location>
</feature>
<feature type="helix" evidence="14">
    <location>
        <begin position="181"/>
        <end position="183"/>
    </location>
</feature>
<feature type="strand" evidence="14">
    <location>
        <begin position="185"/>
        <end position="205"/>
    </location>
</feature>
<feature type="helix" evidence="14">
    <location>
        <begin position="208"/>
        <end position="216"/>
    </location>
</feature>
<feature type="helix" evidence="14">
    <location>
        <begin position="226"/>
        <end position="237"/>
    </location>
</feature>
<feature type="strand" evidence="14">
    <location>
        <begin position="243"/>
        <end position="251"/>
    </location>
</feature>
<feature type="helix" evidence="14">
    <location>
        <begin position="266"/>
        <end position="268"/>
    </location>
</feature>
<feature type="helix" evidence="14">
    <location>
        <begin position="279"/>
        <end position="289"/>
    </location>
</feature>
<feature type="helix" evidence="14">
    <location>
        <begin position="291"/>
        <end position="294"/>
    </location>
</feature>
<feature type="strand" evidence="14">
    <location>
        <begin position="313"/>
        <end position="315"/>
    </location>
</feature>
<feature type="helix" evidence="14">
    <location>
        <begin position="321"/>
        <end position="323"/>
    </location>
</feature>
<feature type="strand" evidence="14">
    <location>
        <begin position="341"/>
        <end position="344"/>
    </location>
</feature>
<feature type="strand" evidence="14">
    <location>
        <begin position="353"/>
        <end position="355"/>
    </location>
</feature>
<feature type="helix" evidence="14">
    <location>
        <begin position="357"/>
        <end position="370"/>
    </location>
</feature>
<feature type="strand" evidence="14">
    <location>
        <begin position="374"/>
        <end position="379"/>
    </location>
</feature>
<feature type="helix" evidence="14">
    <location>
        <begin position="386"/>
        <end position="395"/>
    </location>
</feature>
<feature type="strand" evidence="14">
    <location>
        <begin position="396"/>
        <end position="398"/>
    </location>
</feature>
<feature type="helix" evidence="14">
    <location>
        <begin position="399"/>
        <end position="401"/>
    </location>
</feature>
<feature type="strand" evidence="14">
    <location>
        <begin position="402"/>
        <end position="404"/>
    </location>
</feature>
<feature type="helix" evidence="14">
    <location>
        <begin position="407"/>
        <end position="412"/>
    </location>
</feature>
<feature type="turn" evidence="14">
    <location>
        <begin position="413"/>
        <end position="416"/>
    </location>
</feature>
<feature type="strand" evidence="14">
    <location>
        <begin position="423"/>
        <end position="434"/>
    </location>
</feature>
<feature type="strand" evidence="14">
    <location>
        <begin position="438"/>
        <end position="440"/>
    </location>
</feature>
<feature type="strand" evidence="14">
    <location>
        <begin position="445"/>
        <end position="448"/>
    </location>
</feature>
<feature type="helix" evidence="14">
    <location>
        <begin position="450"/>
        <end position="452"/>
    </location>
</feature>
<feature type="strand" evidence="14">
    <location>
        <begin position="453"/>
        <end position="463"/>
    </location>
</feature>
<feature type="turn" evidence="14">
    <location>
        <begin position="464"/>
        <end position="467"/>
    </location>
</feature>
<feature type="strand" evidence="14">
    <location>
        <begin position="468"/>
        <end position="472"/>
    </location>
</feature>
<feature type="strand" evidence="14">
    <location>
        <begin position="476"/>
        <end position="490"/>
    </location>
</feature>
<feature type="helix" evidence="14">
    <location>
        <begin position="492"/>
        <end position="497"/>
    </location>
</feature>
<feature type="strand" evidence="14">
    <location>
        <begin position="515"/>
        <end position="527"/>
    </location>
</feature>
<feature type="strand" evidence="14">
    <location>
        <begin position="534"/>
        <end position="537"/>
    </location>
</feature>
<feature type="strand" evidence="14">
    <location>
        <begin position="546"/>
        <end position="557"/>
    </location>
</feature>
<feature type="helix" evidence="14">
    <location>
        <begin position="574"/>
        <end position="576"/>
    </location>
</feature>
<feature type="strand" evidence="14">
    <location>
        <begin position="579"/>
        <end position="585"/>
    </location>
</feature>
<feature type="turn" evidence="14">
    <location>
        <begin position="595"/>
        <end position="597"/>
    </location>
</feature>
<feature type="strand" evidence="14">
    <location>
        <begin position="598"/>
        <end position="600"/>
    </location>
</feature>
<feature type="strand" evidence="14">
    <location>
        <begin position="609"/>
        <end position="613"/>
    </location>
</feature>
<feature type="strand" evidence="14">
    <location>
        <begin position="618"/>
        <end position="621"/>
    </location>
</feature>
<feature type="strand" evidence="14">
    <location>
        <begin position="627"/>
        <end position="631"/>
    </location>
</feature>
<feature type="strand" evidence="14">
    <location>
        <begin position="639"/>
        <end position="645"/>
    </location>
</feature>
<feature type="strand" evidence="14">
    <location>
        <begin position="647"/>
        <end position="649"/>
    </location>
</feature>
<feature type="strand" evidence="14">
    <location>
        <begin position="651"/>
        <end position="660"/>
    </location>
</feature>
<organism>
    <name type="scientific">Porphyromonas gingivalis (strain ATCC 33277 / DSM 20709 / CIP 103683 / JCM 12257 / NCTC 11834 / 2561)</name>
    <dbReference type="NCBI Taxonomy" id="431947"/>
    <lineage>
        <taxon>Bacteria</taxon>
        <taxon>Pseudomonadati</taxon>
        <taxon>Bacteroidota</taxon>
        <taxon>Bacteroidia</taxon>
        <taxon>Bacteroidales</taxon>
        <taxon>Porphyromonadaceae</taxon>
        <taxon>Porphyromonas</taxon>
    </lineage>
</organism>
<gene>
    <name evidence="12" type="ordered locus">PGN_0291</name>
</gene>
<accession>B2RHG5</accession>
<reference evidence="12 13" key="1">
    <citation type="journal article" date="2008" name="DNA Res.">
        <title>Determination of the genome sequence of Porphyromonas gingivalis strain ATCC 33277 and genomic comparison with strain W83 revealed extensive genome rearrangements in P. gingivalis.</title>
        <authorList>
            <person name="Naito M."/>
            <person name="Hirakawa H."/>
            <person name="Yamashita A."/>
            <person name="Ohara N."/>
            <person name="Shoji M."/>
            <person name="Yukitake H."/>
            <person name="Nakayama K."/>
            <person name="Toh H."/>
            <person name="Yoshimura F."/>
            <person name="Kuhara S."/>
            <person name="Hattori M."/>
            <person name="Hayashi T."/>
            <person name="Nakayama K."/>
        </authorList>
    </citation>
    <scope>NUCLEOTIDE SEQUENCE [LARGE SCALE GENOMIC DNA]</scope>
    <source>
        <strain evidence="13">ATCC 33277 / DSM 20709 / CIP 103683 / JCM 12257 / NCTC 11834 / 2561</strain>
    </source>
</reference>
<reference key="2">
    <citation type="journal article" date="2009" name="Microbiology">
        <title>Anchoring and length regulation of Porphyromonas gingivalis Mfa1 fimbriae by the downstream gene product Mfa2.</title>
        <authorList>
            <person name="Hasegawa Y."/>
            <person name="Iwami J."/>
            <person name="Sato K."/>
            <person name="Park Y."/>
            <person name="Nishikawa K."/>
            <person name="Atsumi T."/>
            <person name="Moriguchi K."/>
            <person name="Murakami Y."/>
            <person name="Lamont R.J."/>
            <person name="Nakamura H."/>
            <person name="Ohno N."/>
            <person name="Yoshimura F."/>
        </authorList>
    </citation>
    <scope>IDENTIFICATION BY MASS SPECTROMETRY</scope>
    <scope>SUBCELLULAR LOCATION</scope>
    <scope>SUBUNIT</scope>
    <source>
        <strain evidence="7">ATCC 33277 / DSM 20709 / CIP 103683 / JCM 12257 / NCTC 11834 / 2561</strain>
    </source>
</reference>
<reference key="3">
    <citation type="journal article" date="2013" name="Mol. Oral. Microbiol.">
        <title>Localization and function of the accessory protein Mfa3 in Porphyromonas gingivalis Mfa1 fimbriae.</title>
        <authorList>
            <person name="Hasegawa Y."/>
            <person name="Nagano K."/>
            <person name="Ikai R."/>
            <person name="Izumigawa M."/>
            <person name="Yoshida Y."/>
            <person name="Kitai N."/>
            <person name="Lamont R.J."/>
            <person name="Murakami Y."/>
            <person name="Yoshimura F."/>
        </authorList>
    </citation>
    <scope>SUBCELLULAR LOCATION</scope>
    <scope>SUBUNIT</scope>
    <source>
        <strain evidence="8">ATCC 33277 / DSM 20709 / CIP 103683 / JCM 12257 / NCTC 11834 / 2561</strain>
    </source>
</reference>
<reference key="4">
    <citation type="journal article" date="2015" name="J. Dent. Res.">
        <title>A major fimbrilin variant of Mfa1 fimbriae in Porphyromonas gingivalis.</title>
        <authorList>
            <person name="Nagano K."/>
            <person name="Hasegawa Y."/>
            <person name="Yoshida Y."/>
            <person name="Yoshimura F."/>
        </authorList>
    </citation>
    <scope>FUNCTION</scope>
    <scope>SUBUNIT</scope>
    <scope>SUBCELLULAR LOCATION</scope>
    <source>
        <strain evidence="9">ATCC 33277 / DSM 20709 / CIP 103683 / JCM 12257 / NCTC 11834 / 2561</strain>
    </source>
</reference>
<reference key="5">
    <citation type="journal article" date="2015" name="PLoS ONE">
        <title>Mfa4, an accessory protein of Mfa1 fimbriae, modulates fimbrial biogenesis, cell auto-aggregation, and biofilm formation in Porphyromonas gingivalis.</title>
        <authorList>
            <person name="Ikai R."/>
            <person name="Hasegawa Y."/>
            <person name="Izumigawa M."/>
            <person name="Nagano K."/>
            <person name="Yoshida Y."/>
            <person name="Kitai N."/>
            <person name="Lamont R.J."/>
            <person name="Yoshimura F."/>
            <person name="Murakami Y."/>
        </authorList>
    </citation>
    <scope>IDENTIFICATION BY MASS SPECTROMETRY</scope>
    <scope>SUBCELLULAR LOCATION</scope>
    <scope>SUBUNIT</scope>
    <source>
        <strain evidence="10">ATCC 33277 / DSM 20709 / CIP 103683 / JCM 12257 / NCTC 11834 / 2561</strain>
    </source>
</reference>
<protein>
    <recommendedName>
        <fullName>Minor fimbrium subunit Mfa5</fullName>
    </recommendedName>
</protein>
<dbReference type="EMBL" id="AP009380">
    <property type="protein sequence ID" value="BAG32810.1"/>
    <property type="molecule type" value="Genomic_DNA"/>
</dbReference>
<dbReference type="RefSeq" id="WP_012457399.1">
    <property type="nucleotide sequence ID" value="NC_010729.1"/>
</dbReference>
<dbReference type="PDB" id="6TNJ">
    <property type="method" value="X-ray"/>
    <property type="resolution" value="1.85 A"/>
    <property type="chains" value="A=138-435"/>
</dbReference>
<dbReference type="PDB" id="6TO1">
    <property type="method" value="X-ray"/>
    <property type="resolution" value="1.80 A"/>
    <property type="chains" value="A=21-1044"/>
</dbReference>
<dbReference type="PDBsum" id="6TNJ"/>
<dbReference type="PDBsum" id="6TO1"/>
<dbReference type="SMR" id="B2RHG5"/>
<dbReference type="GeneID" id="29255537"/>
<dbReference type="KEGG" id="pgn:PGN_0291"/>
<dbReference type="eggNOG" id="ENOG5032FSV">
    <property type="taxonomic scope" value="Bacteria"/>
</dbReference>
<dbReference type="HOGENOM" id="CLU_007353_0_0_10"/>
<dbReference type="OrthoDB" id="1117451at2"/>
<dbReference type="BioCyc" id="PGIN431947:G1G2V-318-MONOMER"/>
<dbReference type="Proteomes" id="UP000008842">
    <property type="component" value="Chromosome"/>
</dbReference>
<dbReference type="GO" id="GO:0009289">
    <property type="term" value="C:pilus"/>
    <property type="evidence" value="ECO:0000314"/>
    <property type="project" value="UniProtKB"/>
</dbReference>
<dbReference type="CDD" id="cd00198">
    <property type="entry name" value="vWFA"/>
    <property type="match status" value="1"/>
</dbReference>
<dbReference type="Gene3D" id="3.40.50.410">
    <property type="entry name" value="von Willebrand factor, type A domain"/>
    <property type="match status" value="1"/>
</dbReference>
<dbReference type="InterPro" id="IPR002035">
    <property type="entry name" value="VWF_A"/>
</dbReference>
<dbReference type="InterPro" id="IPR036465">
    <property type="entry name" value="vWFA_dom_sf"/>
</dbReference>
<dbReference type="Pfam" id="PF13519">
    <property type="entry name" value="VWA_2"/>
    <property type="match status" value="1"/>
</dbReference>
<dbReference type="SMART" id="SM00327">
    <property type="entry name" value="VWA"/>
    <property type="match status" value="1"/>
</dbReference>
<dbReference type="SUPFAM" id="SSF53300">
    <property type="entry name" value="vWA-like"/>
    <property type="match status" value="1"/>
</dbReference>
<dbReference type="PROSITE" id="PS50234">
    <property type="entry name" value="VWFA"/>
    <property type="match status" value="1"/>
</dbReference>
<evidence type="ECO:0000255" key="1"/>
<evidence type="ECO:0000255" key="2">
    <source>
        <dbReference type="PROSITE-ProRule" id="PRU00219"/>
    </source>
</evidence>
<evidence type="ECO:0000269" key="3">
    <source>
    </source>
</evidence>
<evidence type="ECO:0000269" key="4">
    <source>
    </source>
</evidence>
<evidence type="ECO:0000269" key="5">
    <source>
    </source>
</evidence>
<evidence type="ECO:0000269" key="6">
    <source>
    </source>
</evidence>
<evidence type="ECO:0000303" key="7">
    <source>
    </source>
</evidence>
<evidence type="ECO:0000303" key="8">
    <source>
    </source>
</evidence>
<evidence type="ECO:0000303" key="9">
    <source>
    </source>
</evidence>
<evidence type="ECO:0000303" key="10">
    <source>
    </source>
</evidence>
<evidence type="ECO:0000305" key="11"/>
<evidence type="ECO:0000312" key="12">
    <source>
        <dbReference type="EMBL" id="BAG32810.1"/>
    </source>
</evidence>
<evidence type="ECO:0000312" key="13">
    <source>
        <dbReference type="Proteomes" id="UP000008842"/>
    </source>
</evidence>
<evidence type="ECO:0007829" key="14">
    <source>
        <dbReference type="PDB" id="6TO1"/>
    </source>
</evidence>